<organism>
    <name type="scientific">Pseudomonas syringae pv. tomato (strain ATCC BAA-871 / DC3000)</name>
    <dbReference type="NCBI Taxonomy" id="223283"/>
    <lineage>
        <taxon>Bacteria</taxon>
        <taxon>Pseudomonadati</taxon>
        <taxon>Pseudomonadota</taxon>
        <taxon>Gammaproteobacteria</taxon>
        <taxon>Pseudomonadales</taxon>
        <taxon>Pseudomonadaceae</taxon>
        <taxon>Pseudomonas</taxon>
    </lineage>
</organism>
<protein>
    <recommendedName>
        <fullName evidence="1">Phosphomethylpyrimidine synthase</fullName>
        <ecNumber evidence="1">4.1.99.17</ecNumber>
    </recommendedName>
    <alternativeName>
        <fullName evidence="1">Hydroxymethylpyrimidine phosphate synthase</fullName>
        <shortName evidence="1">HMP-P synthase</shortName>
        <shortName evidence="1">HMP-phosphate synthase</shortName>
        <shortName evidence="1">HMPP synthase</shortName>
    </alternativeName>
    <alternativeName>
        <fullName evidence="1">Thiamine biosynthesis protein ThiC</fullName>
    </alternativeName>
</protein>
<dbReference type="EC" id="4.1.99.17" evidence="1"/>
<dbReference type="EMBL" id="AE016853">
    <property type="protein sequence ID" value="AAO58404.1"/>
    <property type="molecule type" value="Genomic_DNA"/>
</dbReference>
<dbReference type="RefSeq" id="NP_794709.1">
    <property type="nucleotide sequence ID" value="NC_004578.1"/>
</dbReference>
<dbReference type="RefSeq" id="WP_011105255.1">
    <property type="nucleotide sequence ID" value="NC_004578.1"/>
</dbReference>
<dbReference type="SMR" id="Q87VG1"/>
<dbReference type="STRING" id="223283.PSPTO_4976"/>
<dbReference type="GeneID" id="1186661"/>
<dbReference type="KEGG" id="pst:PSPTO_4976"/>
<dbReference type="PATRIC" id="fig|223283.9.peg.5091"/>
<dbReference type="eggNOG" id="COG0422">
    <property type="taxonomic scope" value="Bacteria"/>
</dbReference>
<dbReference type="HOGENOM" id="CLU_013181_2_1_6"/>
<dbReference type="OrthoDB" id="9805897at2"/>
<dbReference type="PhylomeDB" id="Q87VG1"/>
<dbReference type="UniPathway" id="UPA00060"/>
<dbReference type="Proteomes" id="UP000002515">
    <property type="component" value="Chromosome"/>
</dbReference>
<dbReference type="GO" id="GO:0005829">
    <property type="term" value="C:cytosol"/>
    <property type="evidence" value="ECO:0007669"/>
    <property type="project" value="TreeGrafter"/>
</dbReference>
<dbReference type="GO" id="GO:0051539">
    <property type="term" value="F:4 iron, 4 sulfur cluster binding"/>
    <property type="evidence" value="ECO:0007669"/>
    <property type="project" value="UniProtKB-KW"/>
</dbReference>
<dbReference type="GO" id="GO:0016830">
    <property type="term" value="F:carbon-carbon lyase activity"/>
    <property type="evidence" value="ECO:0007669"/>
    <property type="project" value="InterPro"/>
</dbReference>
<dbReference type="GO" id="GO:0008270">
    <property type="term" value="F:zinc ion binding"/>
    <property type="evidence" value="ECO:0007669"/>
    <property type="project" value="UniProtKB-UniRule"/>
</dbReference>
<dbReference type="GO" id="GO:0009228">
    <property type="term" value="P:thiamine biosynthetic process"/>
    <property type="evidence" value="ECO:0007669"/>
    <property type="project" value="UniProtKB-KW"/>
</dbReference>
<dbReference type="GO" id="GO:0009229">
    <property type="term" value="P:thiamine diphosphate biosynthetic process"/>
    <property type="evidence" value="ECO:0007669"/>
    <property type="project" value="UniProtKB-UniRule"/>
</dbReference>
<dbReference type="FunFam" id="3.20.20.540:FF:000001">
    <property type="entry name" value="Phosphomethylpyrimidine synthase"/>
    <property type="match status" value="1"/>
</dbReference>
<dbReference type="Gene3D" id="6.10.250.620">
    <property type="match status" value="1"/>
</dbReference>
<dbReference type="Gene3D" id="3.20.20.540">
    <property type="entry name" value="Radical SAM ThiC family, central domain"/>
    <property type="match status" value="1"/>
</dbReference>
<dbReference type="HAMAP" id="MF_00089">
    <property type="entry name" value="ThiC"/>
    <property type="match status" value="1"/>
</dbReference>
<dbReference type="InterPro" id="IPR037509">
    <property type="entry name" value="ThiC"/>
</dbReference>
<dbReference type="InterPro" id="IPR025747">
    <property type="entry name" value="ThiC-associated_dom"/>
</dbReference>
<dbReference type="InterPro" id="IPR038521">
    <property type="entry name" value="ThiC/Bza_core_dom"/>
</dbReference>
<dbReference type="InterPro" id="IPR002817">
    <property type="entry name" value="ThiC/BzaA/B"/>
</dbReference>
<dbReference type="NCBIfam" id="NF006763">
    <property type="entry name" value="PRK09284.1"/>
    <property type="match status" value="1"/>
</dbReference>
<dbReference type="NCBIfam" id="NF009895">
    <property type="entry name" value="PRK13352.1"/>
    <property type="match status" value="1"/>
</dbReference>
<dbReference type="NCBIfam" id="TIGR00190">
    <property type="entry name" value="thiC"/>
    <property type="match status" value="1"/>
</dbReference>
<dbReference type="PANTHER" id="PTHR30557:SF1">
    <property type="entry name" value="PHOSPHOMETHYLPYRIMIDINE SYNTHASE, CHLOROPLASTIC"/>
    <property type="match status" value="1"/>
</dbReference>
<dbReference type="PANTHER" id="PTHR30557">
    <property type="entry name" value="THIAMINE BIOSYNTHESIS PROTEIN THIC"/>
    <property type="match status" value="1"/>
</dbReference>
<dbReference type="Pfam" id="PF13667">
    <property type="entry name" value="ThiC-associated"/>
    <property type="match status" value="1"/>
</dbReference>
<dbReference type="Pfam" id="PF01964">
    <property type="entry name" value="ThiC_Rad_SAM"/>
    <property type="match status" value="1"/>
</dbReference>
<dbReference type="SFLD" id="SFLDF00407">
    <property type="entry name" value="phosphomethylpyrimidine_syntha"/>
    <property type="match status" value="1"/>
</dbReference>
<dbReference type="SFLD" id="SFLDG01114">
    <property type="entry name" value="phosphomethylpyrimidine_syntha"/>
    <property type="match status" value="1"/>
</dbReference>
<dbReference type="SFLD" id="SFLDS00113">
    <property type="entry name" value="Radical_SAM_Phosphomethylpyrim"/>
    <property type="match status" value="1"/>
</dbReference>
<keyword id="KW-0004">4Fe-4S</keyword>
<keyword id="KW-0408">Iron</keyword>
<keyword id="KW-0411">Iron-sulfur</keyword>
<keyword id="KW-0456">Lyase</keyword>
<keyword id="KW-0479">Metal-binding</keyword>
<keyword id="KW-1185">Reference proteome</keyword>
<keyword id="KW-0949">S-adenosyl-L-methionine</keyword>
<keyword id="KW-0784">Thiamine biosynthesis</keyword>
<keyword id="KW-0862">Zinc</keyword>
<name>THIC_PSESM</name>
<gene>
    <name evidence="1" type="primary">thiC</name>
    <name type="ordered locus">PSPTO_4976</name>
</gene>
<reference key="1">
    <citation type="journal article" date="2003" name="Proc. Natl. Acad. Sci. U.S.A.">
        <title>The complete genome sequence of the Arabidopsis and tomato pathogen Pseudomonas syringae pv. tomato DC3000.</title>
        <authorList>
            <person name="Buell C.R."/>
            <person name="Joardar V."/>
            <person name="Lindeberg M."/>
            <person name="Selengut J."/>
            <person name="Paulsen I.T."/>
            <person name="Gwinn M.L."/>
            <person name="Dodson R.J."/>
            <person name="DeBoy R.T."/>
            <person name="Durkin A.S."/>
            <person name="Kolonay J.F."/>
            <person name="Madupu R."/>
            <person name="Daugherty S.C."/>
            <person name="Brinkac L.M."/>
            <person name="Beanan M.J."/>
            <person name="Haft D.H."/>
            <person name="Nelson W.C."/>
            <person name="Davidsen T.M."/>
            <person name="Zafar N."/>
            <person name="Zhou L."/>
            <person name="Liu J."/>
            <person name="Yuan Q."/>
            <person name="Khouri H.M."/>
            <person name="Fedorova N.B."/>
            <person name="Tran B."/>
            <person name="Russell D."/>
            <person name="Berry K.J."/>
            <person name="Utterback T.R."/>
            <person name="Van Aken S.E."/>
            <person name="Feldblyum T.V."/>
            <person name="D'Ascenzo M."/>
            <person name="Deng W.-L."/>
            <person name="Ramos A.R."/>
            <person name="Alfano J.R."/>
            <person name="Cartinhour S."/>
            <person name="Chatterjee A.K."/>
            <person name="Delaney T.P."/>
            <person name="Lazarowitz S.G."/>
            <person name="Martin G.B."/>
            <person name="Schneider D.J."/>
            <person name="Tang X."/>
            <person name="Bender C.L."/>
            <person name="White O."/>
            <person name="Fraser C.M."/>
            <person name="Collmer A."/>
        </authorList>
    </citation>
    <scope>NUCLEOTIDE SEQUENCE [LARGE SCALE GENOMIC DNA]</scope>
    <source>
        <strain>ATCC BAA-871 / DC3000</strain>
    </source>
</reference>
<proteinExistence type="inferred from homology"/>
<evidence type="ECO:0000255" key="1">
    <source>
        <dbReference type="HAMAP-Rule" id="MF_00089"/>
    </source>
</evidence>
<evidence type="ECO:0000256" key="2">
    <source>
        <dbReference type="SAM" id="MobiDB-lite"/>
    </source>
</evidence>
<accession>Q87VG1</accession>
<sequence length="629" mass="69627">MSTKPKNAAHLSESAQVDSGSVQPFTRSQKIYVQGSRPDIRVPMREVTLDVTPTDFGGEINAPVTVYDTSGPYTDPNVIIDVRKGLADVRSPWIDSRNDTERLPGLSSHFGQQRLSDAELTALRFAHVRNPRRAKAGANVSQMHYARQGIITAEMEYVAIRENMKLQEARAAGLLTQQHAGHSFGASIPKEITAEFVREEIARGRAIIPANINHVELEPMIIGRNFLVKINGNIGNSALGSSIEEEVAKLTWGIRWGSDTVMDLSTGKHIHETREWIIRNSPVPIGTVPIYQALEKVGGAAEDLTWELFRDTLIEQAEQGVDYFTIHAGVLLRYVPLTAKRVTGIVSRGGSIMAKWCLAHHQENFLYTHFEDICEIMKAYDVSFSLGDGLRPGSIADANDAAQFGELETLGELTKIAWKHDLQTMIEGPGHVPMQLIKENMDKQLECCDEAPFYTLGPLTTDIAPGYDHITSGIGAAMIGWFGCAMLCYVTPKEHLGLPNKDDVKTGIITYKIAAHAADLAKGHPGAQIRDNALSKARFEFRWEDQFNLGLDPDTARSYHDETLPKDSAKVAHFCSMCGPKFCSMKITQEVREYAANQRIEAVDVDVARGLAEQAERFKQEGSQLYKKV</sequence>
<comment type="function">
    <text evidence="1">Catalyzes the synthesis of the hydroxymethylpyrimidine phosphate (HMP-P) moiety of thiamine from aminoimidazole ribotide (AIR) in a radical S-adenosyl-L-methionine (SAM)-dependent reaction.</text>
</comment>
<comment type="catalytic activity">
    <reaction evidence="1">
        <text>5-amino-1-(5-phospho-beta-D-ribosyl)imidazole + S-adenosyl-L-methionine = 4-amino-2-methyl-5-(phosphooxymethyl)pyrimidine + CO + 5'-deoxyadenosine + formate + L-methionine + 3 H(+)</text>
        <dbReference type="Rhea" id="RHEA:24840"/>
        <dbReference type="ChEBI" id="CHEBI:15378"/>
        <dbReference type="ChEBI" id="CHEBI:15740"/>
        <dbReference type="ChEBI" id="CHEBI:17245"/>
        <dbReference type="ChEBI" id="CHEBI:17319"/>
        <dbReference type="ChEBI" id="CHEBI:57844"/>
        <dbReference type="ChEBI" id="CHEBI:58354"/>
        <dbReference type="ChEBI" id="CHEBI:59789"/>
        <dbReference type="ChEBI" id="CHEBI:137981"/>
        <dbReference type="EC" id="4.1.99.17"/>
    </reaction>
</comment>
<comment type="cofactor">
    <cofactor evidence="1">
        <name>[4Fe-4S] cluster</name>
        <dbReference type="ChEBI" id="CHEBI:49883"/>
    </cofactor>
    <text evidence="1">Binds 1 [4Fe-4S] cluster per subunit. The cluster is coordinated with 3 cysteines and an exchangeable S-adenosyl-L-methionine.</text>
</comment>
<comment type="pathway">
    <text evidence="1">Cofactor biosynthesis; thiamine diphosphate biosynthesis.</text>
</comment>
<comment type="subunit">
    <text evidence="1">Homodimer.</text>
</comment>
<comment type="similarity">
    <text evidence="1">Belongs to the ThiC family.</text>
</comment>
<feature type="chain" id="PRO_0000152827" description="Phosphomethylpyrimidine synthase">
    <location>
        <begin position="1"/>
        <end position="629"/>
    </location>
</feature>
<feature type="region of interest" description="Disordered" evidence="2">
    <location>
        <begin position="1"/>
        <end position="24"/>
    </location>
</feature>
<feature type="compositionally biased region" description="Polar residues" evidence="2">
    <location>
        <begin position="13"/>
        <end position="24"/>
    </location>
</feature>
<feature type="binding site" evidence="1">
    <location>
        <position position="233"/>
    </location>
    <ligand>
        <name>substrate</name>
    </ligand>
</feature>
<feature type="binding site" evidence="1">
    <location>
        <position position="262"/>
    </location>
    <ligand>
        <name>substrate</name>
    </ligand>
</feature>
<feature type="binding site" evidence="1">
    <location>
        <position position="291"/>
    </location>
    <ligand>
        <name>substrate</name>
    </ligand>
</feature>
<feature type="binding site" evidence="1">
    <location>
        <position position="327"/>
    </location>
    <ligand>
        <name>substrate</name>
    </ligand>
</feature>
<feature type="binding site" evidence="1">
    <location>
        <begin position="347"/>
        <end position="349"/>
    </location>
    <ligand>
        <name>substrate</name>
    </ligand>
</feature>
<feature type="binding site" evidence="1">
    <location>
        <begin position="388"/>
        <end position="391"/>
    </location>
    <ligand>
        <name>substrate</name>
    </ligand>
</feature>
<feature type="binding site" evidence="1">
    <location>
        <position position="427"/>
    </location>
    <ligand>
        <name>substrate</name>
    </ligand>
</feature>
<feature type="binding site" evidence="1">
    <location>
        <position position="431"/>
    </location>
    <ligand>
        <name>Zn(2+)</name>
        <dbReference type="ChEBI" id="CHEBI:29105"/>
    </ligand>
</feature>
<feature type="binding site" evidence="1">
    <location>
        <position position="454"/>
    </location>
    <ligand>
        <name>substrate</name>
    </ligand>
</feature>
<feature type="binding site" evidence="1">
    <location>
        <position position="495"/>
    </location>
    <ligand>
        <name>Zn(2+)</name>
        <dbReference type="ChEBI" id="CHEBI:29105"/>
    </ligand>
</feature>
<feature type="binding site" evidence="1">
    <location>
        <position position="575"/>
    </location>
    <ligand>
        <name>[4Fe-4S] cluster</name>
        <dbReference type="ChEBI" id="CHEBI:49883"/>
        <note>4Fe-4S-S-AdoMet</note>
    </ligand>
</feature>
<feature type="binding site" evidence="1">
    <location>
        <position position="578"/>
    </location>
    <ligand>
        <name>[4Fe-4S] cluster</name>
        <dbReference type="ChEBI" id="CHEBI:49883"/>
        <note>4Fe-4S-S-AdoMet</note>
    </ligand>
</feature>
<feature type="binding site" evidence="1">
    <location>
        <position position="583"/>
    </location>
    <ligand>
        <name>[4Fe-4S] cluster</name>
        <dbReference type="ChEBI" id="CHEBI:49883"/>
        <note>4Fe-4S-S-AdoMet</note>
    </ligand>
</feature>